<sequence length="35" mass="4220">GCRYMFGDCEKDEDCCKHLGCKRKMKYCAWDFTFT</sequence>
<dbReference type="SMR" id="P0DM13"/>
<dbReference type="GO" id="GO:0005576">
    <property type="term" value="C:extracellular region"/>
    <property type="evidence" value="ECO:0007669"/>
    <property type="project" value="UniProtKB-SubCell"/>
</dbReference>
<dbReference type="GO" id="GO:0008200">
    <property type="term" value="F:ion channel inhibitor activity"/>
    <property type="evidence" value="ECO:0007669"/>
    <property type="project" value="InterPro"/>
</dbReference>
<dbReference type="GO" id="GO:0017080">
    <property type="term" value="F:sodium channel regulator activity"/>
    <property type="evidence" value="ECO:0007669"/>
    <property type="project" value="UniProtKB-KW"/>
</dbReference>
<dbReference type="GO" id="GO:0090729">
    <property type="term" value="F:toxin activity"/>
    <property type="evidence" value="ECO:0007669"/>
    <property type="project" value="UniProtKB-KW"/>
</dbReference>
<dbReference type="InterPro" id="IPR011696">
    <property type="entry name" value="Huwentoxin-1"/>
</dbReference>
<dbReference type="Pfam" id="PF07740">
    <property type="entry name" value="Toxin_12"/>
    <property type="match status" value="1"/>
</dbReference>
<dbReference type="SUPFAM" id="SSF57059">
    <property type="entry name" value="omega toxin-like"/>
    <property type="match status" value="1"/>
</dbReference>
<comment type="function">
    <text evidence="1">Gating-modifier toxin that targets voltage-gated sodium channels with a preferential activity on Nav1.7/SCN9A. On Nav1.7/SCN9A, the toxin acts by shifting the voltage-dependence of activation to more depolarized potentials, whereas it does not cause significant effect on the voltage-dependence of activation on other sodium channels. Minor effects are observed on the voltage-dependence of steady-state fast inactivation for all sodium channels tested (Nav1.1/SCN1A-Nav1.8/SCN10A). By testing the toxin on channel chimera, it has been shown to interact with the S3-S4 linkers in DII and DIV domains of Nav1.7/SCN9A. In vivo, the toxin dose-dependently reduces OD1-induced spontaneous pain behaviors.</text>
</comment>
<comment type="subcellular location">
    <subcellularLocation>
        <location evidence="2">Secreted</location>
    </subcellularLocation>
</comment>
<comment type="tissue specificity">
    <text evidence="5">Expressed by the venom gland.</text>
</comment>
<comment type="domain">
    <text evidence="1">The presence of a 'disulfide through disulfide knot' structurally defines this protein as a knottin.</text>
</comment>
<comment type="mass spectrometry" mass="4210.5" method="MALDI" evidence="2">
    <text>Monoisotopic mass.</text>
</comment>
<comment type="miscellaneous">
    <text evidence="1">Negative results: shows no or weak effect on hNav1.8/SCN10A, rKv2.1/KCNB1 and hCav1.2/CACNA1C, hCav2.2/CACNA1B, alpha-7/SCN9A nAChR, alpha-3/SCN3A nAChR.</text>
</comment>
<comment type="similarity">
    <text evidence="4">Belongs to the neurotoxin 10 (Hwtx-1) family. 28 (Jztx-11) subfamily.</text>
</comment>
<organism>
    <name type="scientific">Pamphobeteus nigricolor</name>
    <name type="common">Giant blue bloom tarantula</name>
    <dbReference type="NCBI Taxonomy" id="2083160"/>
    <lineage>
        <taxon>Eukaryota</taxon>
        <taxon>Metazoa</taxon>
        <taxon>Ecdysozoa</taxon>
        <taxon>Arthropoda</taxon>
        <taxon>Chelicerata</taxon>
        <taxon>Arachnida</taxon>
        <taxon>Araneae</taxon>
        <taxon>Mygalomorphae</taxon>
        <taxon>Theraphosidae</taxon>
        <taxon>Pamphobeteus</taxon>
    </lineage>
</organism>
<feature type="chain" id="PRO_0000444152" description="Mu-theraphotoxin-Pn3b" evidence="2">
    <location>
        <begin position="1"/>
        <end position="35"/>
    </location>
</feature>
<feature type="disulfide bond" evidence="1">
    <location>
        <begin position="2"/>
        <end position="16"/>
    </location>
</feature>
<feature type="disulfide bond" evidence="1">
    <location>
        <begin position="9"/>
        <end position="21"/>
    </location>
</feature>
<feature type="disulfide bond" evidence="1">
    <location>
        <begin position="15"/>
        <end position="28"/>
    </location>
</feature>
<proteinExistence type="evidence at protein level"/>
<reference key="1">
    <citation type="journal article" date="2017" name="Sci. Rep.">
        <title>Pharmacological characterisation of the highly NaV1.7 selective spider venom peptide Pn3a.</title>
        <authorList>
            <person name="Deuis J.R."/>
            <person name="Dekan Z."/>
            <person name="Wingerd J.S."/>
            <person name="Smith J.J."/>
            <person name="Munasinghe N.R."/>
            <person name="Bhola R.F."/>
            <person name="Imlach W.L."/>
            <person name="Herzig V."/>
            <person name="Armstrong D.A."/>
            <person name="Rosengren K.J."/>
            <person name="Bosmans F."/>
            <person name="Waxman S.G."/>
            <person name="Dib-Hajj S.D."/>
            <person name="Escoubas P."/>
            <person name="Minett M.S."/>
            <person name="Christie M.J."/>
            <person name="King G.F."/>
            <person name="Alewood P.F."/>
            <person name="Lewis R.J."/>
            <person name="Wood J.N."/>
            <person name="Vetter I."/>
        </authorList>
    </citation>
    <scope>PROTEIN SEQUENCE</scope>
    <scope>MASS SPECTROMETRY</scope>
    <scope>SUBCELLULAR LOCATION</scope>
    <source>
        <tissue>Venom</tissue>
    </source>
</reference>
<reference key="2">
    <citation type="journal article" date="2017" name="Sci. Rep.">
        <title>Corrigendum: Pharmacological characterisation of the highly NaV1.7 selective spider venom peptide Pn3a.</title>
        <authorList>
            <person name="Deuis J.R."/>
            <person name="Dekan Z."/>
            <person name="Wingerd J.S."/>
            <person name="Smith J.J."/>
            <person name="Munasinghe N.R."/>
            <person name="Bhola R.F."/>
            <person name="Imlach W.L."/>
            <person name="Herzig V."/>
            <person name="Armstrong D.A."/>
            <person name="Rosengren K.J."/>
            <person name="Bosmans F."/>
            <person name="Waxman S.G."/>
            <person name="Dib-Hajj S.D."/>
            <person name="Escoubas P."/>
            <person name="Minett M.S."/>
            <person name="Christie M.J."/>
            <person name="King G.F."/>
            <person name="Alewood P.F."/>
            <person name="Lewis R.J."/>
            <person name="Wood J.N."/>
            <person name="Vetter I."/>
        </authorList>
    </citation>
    <scope>ERRATUM OF PUBMED:28106092</scope>
</reference>
<accession>P0DM13</accession>
<keyword id="KW-0903">Direct protein sequencing</keyword>
<keyword id="KW-1015">Disulfide bond</keyword>
<keyword id="KW-0872">Ion channel impairing toxin</keyword>
<keyword id="KW-0960">Knottin</keyword>
<keyword id="KW-0528">Neurotoxin</keyword>
<keyword id="KW-0964">Secreted</keyword>
<keyword id="KW-0800">Toxin</keyword>
<keyword id="KW-0738">Voltage-gated sodium channel impairing toxin</keyword>
<protein>
    <recommendedName>
        <fullName evidence="3">Mu-theraphotoxin-Pn3b</fullName>
        <shortName evidence="3">Mu-TRTX-Pn3b</shortName>
    </recommendedName>
</protein>
<evidence type="ECO:0000250" key="1">
    <source>
        <dbReference type="UniProtKB" id="P0DM12"/>
    </source>
</evidence>
<evidence type="ECO:0000269" key="2">
    <source>
    </source>
</evidence>
<evidence type="ECO:0000303" key="3">
    <source>
    </source>
</evidence>
<evidence type="ECO:0000305" key="4"/>
<evidence type="ECO:0000305" key="5">
    <source>
    </source>
</evidence>
<name>PN3B_PAMNI</name>